<accession>A4IFL2</accession>
<organism>
    <name type="scientific">Bos taurus</name>
    <name type="common">Bovine</name>
    <dbReference type="NCBI Taxonomy" id="9913"/>
    <lineage>
        <taxon>Eukaryota</taxon>
        <taxon>Metazoa</taxon>
        <taxon>Chordata</taxon>
        <taxon>Craniata</taxon>
        <taxon>Vertebrata</taxon>
        <taxon>Euteleostomi</taxon>
        <taxon>Mammalia</taxon>
        <taxon>Eutheria</taxon>
        <taxon>Laurasiatheria</taxon>
        <taxon>Artiodactyla</taxon>
        <taxon>Ruminantia</taxon>
        <taxon>Pecora</taxon>
        <taxon>Bovidae</taxon>
        <taxon>Bovinae</taxon>
        <taxon>Bos</taxon>
    </lineage>
</organism>
<protein>
    <recommendedName>
        <fullName>Small cell adhesion glycoprotein</fullName>
    </recommendedName>
    <alternativeName>
        <fullName>Small transmembrane and glycosylated protein</fullName>
    </alternativeName>
</protein>
<dbReference type="EMBL" id="BC134631">
    <property type="protein sequence ID" value="AAI34632.1"/>
    <property type="molecule type" value="mRNA"/>
</dbReference>
<dbReference type="RefSeq" id="NP_001077262.1">
    <property type="nucleotide sequence ID" value="NM_001083793.1"/>
</dbReference>
<dbReference type="RefSeq" id="XP_059742777.1">
    <property type="nucleotide sequence ID" value="XM_059886794.1"/>
</dbReference>
<dbReference type="FunCoup" id="A4IFL2">
    <property type="interactions" value="92"/>
</dbReference>
<dbReference type="STRING" id="9913.ENSBTAP00000071382"/>
<dbReference type="GlyCosmos" id="A4IFL2">
    <property type="glycosylation" value="7 sites, No reported glycans"/>
</dbReference>
<dbReference type="GlyGen" id="A4IFL2">
    <property type="glycosylation" value="7 sites"/>
</dbReference>
<dbReference type="PaxDb" id="9913-ENSBTAP00000002572"/>
<dbReference type="Ensembl" id="ENSBTAT00000002572.5">
    <property type="protein sequence ID" value="ENSBTAP00000002572.4"/>
    <property type="gene ID" value="ENSBTAG00000001983.6"/>
</dbReference>
<dbReference type="GeneID" id="787004"/>
<dbReference type="KEGG" id="bta:787004"/>
<dbReference type="CTD" id="57228"/>
<dbReference type="VEuPathDB" id="HostDB:ENSBTAG00000001983"/>
<dbReference type="VGNC" id="VGNC:34982">
    <property type="gene designation" value="SMAGP"/>
</dbReference>
<dbReference type="eggNOG" id="ENOG502S7EH">
    <property type="taxonomic scope" value="Eukaryota"/>
</dbReference>
<dbReference type="GeneTree" id="ENSGT00390000010077"/>
<dbReference type="HOGENOM" id="CLU_175196_0_0_1"/>
<dbReference type="InParanoid" id="A4IFL2"/>
<dbReference type="OMA" id="QMEDFPH"/>
<dbReference type="OrthoDB" id="9045634at2759"/>
<dbReference type="Proteomes" id="UP000009136">
    <property type="component" value="Chromosome 5"/>
</dbReference>
<dbReference type="Bgee" id="ENSBTAG00000001983">
    <property type="expression patterns" value="Expressed in abomasum and 104 other cell types or tissues"/>
</dbReference>
<dbReference type="GO" id="GO:0030054">
    <property type="term" value="C:cell junction"/>
    <property type="evidence" value="ECO:0007669"/>
    <property type="project" value="Ensembl"/>
</dbReference>
<dbReference type="GO" id="GO:0030659">
    <property type="term" value="C:cytoplasmic vesicle membrane"/>
    <property type="evidence" value="ECO:0007669"/>
    <property type="project" value="UniProtKB-SubCell"/>
</dbReference>
<dbReference type="GO" id="GO:0005654">
    <property type="term" value="C:nucleoplasm"/>
    <property type="evidence" value="ECO:0007669"/>
    <property type="project" value="Ensembl"/>
</dbReference>
<dbReference type="GO" id="GO:0005886">
    <property type="term" value="C:plasma membrane"/>
    <property type="evidence" value="ECO:0007669"/>
    <property type="project" value="UniProtKB-SubCell"/>
</dbReference>
<dbReference type="InterPro" id="IPR043243">
    <property type="entry name" value="SMAGP"/>
</dbReference>
<dbReference type="PANTHER" id="PTHR47394">
    <property type="entry name" value="SMALL CELL ADHESION GLYCOPROTEIN"/>
    <property type="match status" value="1"/>
</dbReference>
<dbReference type="PANTHER" id="PTHR47394:SF1">
    <property type="entry name" value="SMALL CELL ADHESION GLYCOPROTEIN"/>
    <property type="match status" value="1"/>
</dbReference>
<reference key="1">
    <citation type="submission" date="2007-03" db="EMBL/GenBank/DDBJ databases">
        <authorList>
            <consortium name="NIH - Mammalian Gene Collection (MGC) project"/>
        </authorList>
    </citation>
    <scope>NUCLEOTIDE SEQUENCE [LARGE SCALE MRNA]</scope>
    <source>
        <strain>Hereford</strain>
        <tissue>Fetal skin</tissue>
    </source>
</reference>
<sequence length="97" mass="10565">MTSFPTTPPPAEELMATTILQATEALSPEAEASTALIAVVITVVFLTLLSVVILIFFYLYKNKGSYVTYEPADGEPGAVVLMENDSAKGREKEEYFI</sequence>
<evidence type="ECO:0000250" key="1"/>
<evidence type="ECO:0000250" key="2">
    <source>
        <dbReference type="UniProtKB" id="Q0VAQ4"/>
    </source>
</evidence>
<evidence type="ECO:0000255" key="3"/>
<evidence type="ECO:0000305" key="4"/>
<gene>
    <name type="primary">SMAGP</name>
</gene>
<comment type="function">
    <text evidence="1">May play a role in epithelial cell-cell contacts. May play a role in tumor invasiveness and metastasis formation (By similarity).</text>
</comment>
<comment type="subcellular location">
    <subcellularLocation>
        <location evidence="2">Cell membrane</location>
        <topology evidence="3">Single-pass type III membrane protein</topology>
    </subcellularLocation>
    <subcellularLocation>
        <location evidence="2">Cytoplasmic vesicle membrane</location>
        <topology evidence="3">Single-pass type III membrane protein</topology>
    </subcellularLocation>
    <text evidence="2">Predominantly on lateral parts of the membrane, at cell-cell epithelial junctions. Detected on cytoplasmic membranes in undifferentiated tumors.</text>
</comment>
<comment type="PTM">
    <text evidence="1">O-glycosylated. The O-glycan is modified with sialic acid residues (By similarity).</text>
</comment>
<comment type="similarity">
    <text evidence="4">Belongs to the SMAGP family.</text>
</comment>
<proteinExistence type="inferred from homology"/>
<keyword id="KW-1003">Cell membrane</keyword>
<keyword id="KW-0968">Cytoplasmic vesicle</keyword>
<keyword id="KW-0325">Glycoprotein</keyword>
<keyword id="KW-0472">Membrane</keyword>
<keyword id="KW-1185">Reference proteome</keyword>
<keyword id="KW-0730">Sialic acid</keyword>
<keyword id="KW-0812">Transmembrane</keyword>
<keyword id="KW-1133">Transmembrane helix</keyword>
<feature type="chain" id="PRO_0000328794" description="Small cell adhesion glycoprotein">
    <location>
        <begin position="1"/>
        <end position="97"/>
    </location>
</feature>
<feature type="topological domain" description="Extracellular" evidence="3">
    <location>
        <begin position="1"/>
        <end position="36"/>
    </location>
</feature>
<feature type="transmembrane region" description="Helical; Signal-anchor for type III membrane protein" evidence="3">
    <location>
        <begin position="37"/>
        <end position="57"/>
    </location>
</feature>
<feature type="topological domain" description="Cytoplasmic" evidence="3">
    <location>
        <begin position="58"/>
        <end position="97"/>
    </location>
</feature>
<feature type="glycosylation site" description="O-linked (GalNAc...) threonine" evidence="3">
    <location>
        <position position="2"/>
    </location>
</feature>
<feature type="glycosylation site" description="O-linked (GalNAc...) serine" evidence="3">
    <location>
        <position position="3"/>
    </location>
</feature>
<feature type="glycosylation site" description="O-linked (GalNAc...) threonine" evidence="3">
    <location>
        <position position="6"/>
    </location>
</feature>
<feature type="glycosylation site" description="O-linked (GalNAc...) threonine" evidence="3">
    <location>
        <position position="7"/>
    </location>
</feature>
<feature type="glycosylation site" description="O-linked (GalNAc...) threonine" evidence="3">
    <location>
        <position position="17"/>
    </location>
</feature>
<feature type="glycosylation site" description="O-linked (GalNAc...) threonine" evidence="3">
    <location>
        <position position="18"/>
    </location>
</feature>
<feature type="glycosylation site" description="O-linked (GalNAc...) threonine" evidence="3">
    <location>
        <position position="23"/>
    </location>
</feature>
<name>SMAGP_BOVIN</name>